<keyword id="KW-0997">Cell inner membrane</keyword>
<keyword id="KW-1003">Cell membrane</keyword>
<keyword id="KW-0472">Membrane</keyword>
<keyword id="KW-0653">Protein transport</keyword>
<keyword id="KW-0811">Translocation</keyword>
<keyword id="KW-0812">Transmembrane</keyword>
<keyword id="KW-1133">Transmembrane helix</keyword>
<keyword id="KW-0813">Transport</keyword>
<organism>
    <name type="scientific">Campylobacter fetus subsp. fetus (strain 82-40)</name>
    <dbReference type="NCBI Taxonomy" id="360106"/>
    <lineage>
        <taxon>Bacteria</taxon>
        <taxon>Pseudomonadati</taxon>
        <taxon>Campylobacterota</taxon>
        <taxon>Epsilonproteobacteria</taxon>
        <taxon>Campylobacterales</taxon>
        <taxon>Campylobacteraceae</taxon>
        <taxon>Campylobacter</taxon>
    </lineage>
</organism>
<feature type="chain" id="PRO_1000058955" description="Sec-independent protein translocase protein TatA">
    <location>
        <begin position="1"/>
        <end position="71"/>
    </location>
</feature>
<feature type="transmembrane region" description="Helical" evidence="1">
    <location>
        <begin position="1"/>
        <end position="21"/>
    </location>
</feature>
<feature type="region of interest" description="Disordered" evidence="2">
    <location>
        <begin position="41"/>
        <end position="71"/>
    </location>
</feature>
<feature type="compositionally biased region" description="Basic and acidic residues" evidence="2">
    <location>
        <begin position="41"/>
        <end position="57"/>
    </location>
</feature>
<feature type="compositionally biased region" description="Polar residues" evidence="2">
    <location>
        <begin position="58"/>
        <end position="71"/>
    </location>
</feature>
<dbReference type="EMBL" id="CP000487">
    <property type="protein sequence ID" value="ABK82240.1"/>
    <property type="molecule type" value="Genomic_DNA"/>
</dbReference>
<dbReference type="RefSeq" id="WP_002850316.1">
    <property type="nucleotide sequence ID" value="NC_008599.1"/>
</dbReference>
<dbReference type="SMR" id="A0RQU1"/>
<dbReference type="GeneID" id="61065254"/>
<dbReference type="KEGG" id="cff:CFF8240_1435"/>
<dbReference type="eggNOG" id="COG1826">
    <property type="taxonomic scope" value="Bacteria"/>
</dbReference>
<dbReference type="HOGENOM" id="CLU_086034_5_4_7"/>
<dbReference type="Proteomes" id="UP000000760">
    <property type="component" value="Chromosome"/>
</dbReference>
<dbReference type="GO" id="GO:0033281">
    <property type="term" value="C:TAT protein transport complex"/>
    <property type="evidence" value="ECO:0007669"/>
    <property type="project" value="UniProtKB-UniRule"/>
</dbReference>
<dbReference type="GO" id="GO:0008320">
    <property type="term" value="F:protein transmembrane transporter activity"/>
    <property type="evidence" value="ECO:0007669"/>
    <property type="project" value="UniProtKB-UniRule"/>
</dbReference>
<dbReference type="GO" id="GO:0043953">
    <property type="term" value="P:protein transport by the Tat complex"/>
    <property type="evidence" value="ECO:0007669"/>
    <property type="project" value="UniProtKB-UniRule"/>
</dbReference>
<dbReference type="Gene3D" id="1.20.5.3310">
    <property type="match status" value="1"/>
</dbReference>
<dbReference type="HAMAP" id="MF_00236">
    <property type="entry name" value="TatA_E"/>
    <property type="match status" value="1"/>
</dbReference>
<dbReference type="InterPro" id="IPR003369">
    <property type="entry name" value="TatA/B/E"/>
</dbReference>
<dbReference type="InterPro" id="IPR006312">
    <property type="entry name" value="TatA/E"/>
</dbReference>
<dbReference type="NCBIfam" id="TIGR01411">
    <property type="entry name" value="tatAE"/>
    <property type="match status" value="1"/>
</dbReference>
<dbReference type="PANTHER" id="PTHR42982">
    <property type="entry name" value="SEC-INDEPENDENT PROTEIN TRANSLOCASE PROTEIN TATA"/>
    <property type="match status" value="1"/>
</dbReference>
<dbReference type="PANTHER" id="PTHR42982:SF1">
    <property type="entry name" value="SEC-INDEPENDENT PROTEIN TRANSLOCASE PROTEIN TATA"/>
    <property type="match status" value="1"/>
</dbReference>
<dbReference type="Pfam" id="PF02416">
    <property type="entry name" value="TatA_B_E"/>
    <property type="match status" value="1"/>
</dbReference>
<reference key="1">
    <citation type="submission" date="2006-11" db="EMBL/GenBank/DDBJ databases">
        <title>Sequence of Campylobacter fetus subsp. fetus 82-40.</title>
        <authorList>
            <person name="Fouts D.E."/>
            <person name="Nelson K.E."/>
        </authorList>
    </citation>
    <scope>NUCLEOTIDE SEQUENCE [LARGE SCALE GENOMIC DNA]</scope>
    <source>
        <strain>82-40</strain>
    </source>
</reference>
<comment type="function">
    <text evidence="1">Part of the twin-arginine translocation (Tat) system that transports large folded proteins containing a characteristic twin-arginine motif in their signal peptide across membranes. TatA could form the protein-conducting channel of the Tat system.</text>
</comment>
<comment type="subunit">
    <text evidence="1">The Tat system comprises two distinct complexes: a TatABC complex, containing multiple copies of TatA, TatB and TatC subunits, and a separate TatA complex, containing only TatA subunits. Substrates initially bind to the TatABC complex, which probably triggers association of the separate TatA complex to form the active translocon.</text>
</comment>
<comment type="subcellular location">
    <subcellularLocation>
        <location evidence="1">Cell inner membrane</location>
        <topology evidence="1">Single-pass membrane protein</topology>
    </subcellularLocation>
</comment>
<comment type="similarity">
    <text evidence="1">Belongs to the TatA/E family.</text>
</comment>
<name>TATA_CAMFF</name>
<proteinExistence type="inferred from homology"/>
<gene>
    <name evidence="1" type="primary">tatA</name>
    <name type="ordered locus">CFF8240_1435</name>
</gene>
<evidence type="ECO:0000255" key="1">
    <source>
        <dbReference type="HAMAP-Rule" id="MF_00236"/>
    </source>
</evidence>
<evidence type="ECO:0000256" key="2">
    <source>
        <dbReference type="SAM" id="MobiDB-lite"/>
    </source>
</evidence>
<protein>
    <recommendedName>
        <fullName evidence="1">Sec-independent protein translocase protein TatA</fullName>
    </recommendedName>
</protein>
<accession>A0RQU1</accession>
<sequence>MGSFSMGHWLIVLAIIVLLFGAKKIPELAKGVGKGIKTFKKEMEDETPVEKIEKADSETQSTKQNETTKNV</sequence>